<accession>Q32Q05</accession>
<accession>Q6IE74</accession>
<organism>
    <name type="scientific">Rattus norvegicus</name>
    <name type="common">Rat</name>
    <dbReference type="NCBI Taxonomy" id="10116"/>
    <lineage>
        <taxon>Eukaryota</taxon>
        <taxon>Metazoa</taxon>
        <taxon>Chordata</taxon>
        <taxon>Craniata</taxon>
        <taxon>Vertebrata</taxon>
        <taxon>Euteleostomi</taxon>
        <taxon>Mammalia</taxon>
        <taxon>Eutheria</taxon>
        <taxon>Euarchontoglires</taxon>
        <taxon>Glires</taxon>
        <taxon>Rodentia</taxon>
        <taxon>Myomorpha</taxon>
        <taxon>Muroidea</taxon>
        <taxon>Muridae</taxon>
        <taxon>Murinae</taxon>
        <taxon>Rattus</taxon>
    </lineage>
</organism>
<name>OTU1_RAT</name>
<feature type="chain" id="PRO_0000282358" description="Ubiquitin thioesterase OTU1">
    <location>
        <begin position="1"/>
        <end position="343"/>
    </location>
</feature>
<feature type="domain" description="OTU" evidence="3">
    <location>
        <begin position="144"/>
        <end position="269"/>
    </location>
</feature>
<feature type="zinc finger region" description="C2H2-type">
    <location>
        <begin position="313"/>
        <end position="337"/>
    </location>
</feature>
<feature type="region of interest" description="UBX-like">
    <location>
        <begin position="45"/>
        <end position="123"/>
    </location>
</feature>
<feature type="region of interest" description="Cys-loop" evidence="1">
    <location>
        <begin position="149"/>
        <end position="155"/>
    </location>
</feature>
<feature type="region of interest" description="Variable-loop" evidence="1">
    <location>
        <begin position="208"/>
        <end position="218"/>
    </location>
</feature>
<feature type="region of interest" description="His-loop" evidence="1">
    <location>
        <begin position="258"/>
        <end position="262"/>
    </location>
</feature>
<feature type="region of interest" description="S2 site" evidence="1">
    <location>
        <begin position="286"/>
        <end position="291"/>
    </location>
</feature>
<feature type="active site" evidence="2">
    <location>
        <position position="152"/>
    </location>
</feature>
<feature type="active site" description="Nucleophile" evidence="1">
    <location>
        <position position="155"/>
    </location>
</feature>
<feature type="active site" evidence="1">
    <location>
        <position position="262"/>
    </location>
</feature>
<feature type="active site" evidence="2">
    <location>
        <position position="337"/>
    </location>
</feature>
<feature type="binding site" evidence="1">
    <location>
        <position position="261"/>
    </location>
    <ligand>
        <name>substrate</name>
    </ligand>
</feature>
<keyword id="KW-0963">Cytoplasm</keyword>
<keyword id="KW-0378">Hydrolase</keyword>
<keyword id="KW-0479">Metal-binding</keyword>
<keyword id="KW-0645">Protease</keyword>
<keyword id="KW-1185">Reference proteome</keyword>
<keyword id="KW-0788">Thiol protease</keyword>
<keyword id="KW-0833">Ubl conjugation pathway</keyword>
<keyword id="KW-0834">Unfolded protein response</keyword>
<keyword id="KW-0862">Zinc</keyword>
<keyword id="KW-0863">Zinc-finger</keyword>
<dbReference type="EC" id="3.4.19.12" evidence="1"/>
<dbReference type="EMBL" id="BC107904">
    <property type="protein sequence ID" value="AAI07905.1"/>
    <property type="molecule type" value="mRNA"/>
</dbReference>
<dbReference type="EMBL" id="BN000319">
    <property type="protein sequence ID" value="CAE48374.1"/>
    <property type="molecule type" value="mRNA"/>
</dbReference>
<dbReference type="RefSeq" id="NP_001008889.2">
    <property type="nucleotide sequence ID" value="NM_001008889.2"/>
</dbReference>
<dbReference type="SMR" id="Q32Q05"/>
<dbReference type="BioGRID" id="264526">
    <property type="interactions" value="1"/>
</dbReference>
<dbReference type="FunCoup" id="Q32Q05">
    <property type="interactions" value="1941"/>
</dbReference>
<dbReference type="STRING" id="10116.ENSRNOP00000031836"/>
<dbReference type="MEROPS" id="C85.007"/>
<dbReference type="iPTMnet" id="Q32Q05"/>
<dbReference type="PhosphoSitePlus" id="Q32Q05"/>
<dbReference type="PaxDb" id="10116-ENSRNOP00000031836"/>
<dbReference type="Ensembl" id="ENSRNOT00000030476.3">
    <property type="protein sequence ID" value="ENSRNOP00000031836.2"/>
    <property type="gene ID" value="ENSRNOG00000025704.3"/>
</dbReference>
<dbReference type="GeneID" id="363982"/>
<dbReference type="KEGG" id="rno:363982"/>
<dbReference type="UCSC" id="RGD:1359726">
    <property type="organism name" value="rat"/>
</dbReference>
<dbReference type="AGR" id="RGD:1359726"/>
<dbReference type="CTD" id="55432"/>
<dbReference type="RGD" id="1359726">
    <property type="gene designation" value="Yod1"/>
</dbReference>
<dbReference type="eggNOG" id="KOG3288">
    <property type="taxonomic scope" value="Eukaryota"/>
</dbReference>
<dbReference type="GeneTree" id="ENSGT00390000009989"/>
<dbReference type="HOGENOM" id="CLU_049327_1_0_1"/>
<dbReference type="InParanoid" id="Q32Q05"/>
<dbReference type="OMA" id="TRCILVY"/>
<dbReference type="OrthoDB" id="65596at2759"/>
<dbReference type="PhylomeDB" id="Q32Q05"/>
<dbReference type="TreeFam" id="TF323700"/>
<dbReference type="Reactome" id="R-RNO-5689896">
    <property type="pathway name" value="Ovarian tumor domain proteases"/>
</dbReference>
<dbReference type="PRO" id="PR:Q32Q05"/>
<dbReference type="Proteomes" id="UP000002494">
    <property type="component" value="Chromosome 13"/>
</dbReference>
<dbReference type="Bgee" id="ENSRNOG00000025704">
    <property type="expression patterns" value="Expressed in esophagus and 18 other cell types or tissues"/>
</dbReference>
<dbReference type="GO" id="GO:0005737">
    <property type="term" value="C:cytoplasm"/>
    <property type="evidence" value="ECO:0000250"/>
    <property type="project" value="UniProtKB"/>
</dbReference>
<dbReference type="GO" id="GO:0004843">
    <property type="term" value="F:cysteine-type deubiquitinase activity"/>
    <property type="evidence" value="ECO:0000250"/>
    <property type="project" value="UniProtKB"/>
</dbReference>
<dbReference type="GO" id="GO:1990380">
    <property type="term" value="F:K48-linked deubiquitinase activity"/>
    <property type="evidence" value="ECO:0000266"/>
    <property type="project" value="RGD"/>
</dbReference>
<dbReference type="GO" id="GO:0031625">
    <property type="term" value="F:ubiquitin protein ligase binding"/>
    <property type="evidence" value="ECO:0000266"/>
    <property type="project" value="RGD"/>
</dbReference>
<dbReference type="GO" id="GO:0008270">
    <property type="term" value="F:zinc ion binding"/>
    <property type="evidence" value="ECO:0007669"/>
    <property type="project" value="UniProtKB-KW"/>
</dbReference>
<dbReference type="GO" id="GO:0030968">
    <property type="term" value="P:endoplasmic reticulum unfolded protein response"/>
    <property type="evidence" value="ECO:0000250"/>
    <property type="project" value="UniProtKB"/>
</dbReference>
<dbReference type="GO" id="GO:0036503">
    <property type="term" value="P:ERAD pathway"/>
    <property type="evidence" value="ECO:0000250"/>
    <property type="project" value="UniProtKB"/>
</dbReference>
<dbReference type="GO" id="GO:0016236">
    <property type="term" value="P:macroautophagy"/>
    <property type="evidence" value="ECO:0000250"/>
    <property type="project" value="UniProtKB"/>
</dbReference>
<dbReference type="GO" id="GO:1904153">
    <property type="term" value="P:negative regulation of retrograde protein transport, ER to cytosol"/>
    <property type="evidence" value="ECO:0000266"/>
    <property type="project" value="RGD"/>
</dbReference>
<dbReference type="GO" id="GO:0035871">
    <property type="term" value="P:protein K11-linked deubiquitination"/>
    <property type="evidence" value="ECO:0000250"/>
    <property type="project" value="UniProtKB"/>
</dbReference>
<dbReference type="GO" id="GO:1990167">
    <property type="term" value="P:protein K27-linked deubiquitination"/>
    <property type="evidence" value="ECO:0000250"/>
    <property type="project" value="UniProtKB"/>
</dbReference>
<dbReference type="GO" id="GO:0035523">
    <property type="term" value="P:protein K29-linked deubiquitination"/>
    <property type="evidence" value="ECO:0000250"/>
    <property type="project" value="UniProtKB"/>
</dbReference>
<dbReference type="GO" id="GO:1990168">
    <property type="term" value="P:protein K33-linked deubiquitination"/>
    <property type="evidence" value="ECO:0000250"/>
    <property type="project" value="UniProtKB"/>
</dbReference>
<dbReference type="GO" id="GO:0071108">
    <property type="term" value="P:protein K48-linked deubiquitination"/>
    <property type="evidence" value="ECO:0000250"/>
    <property type="project" value="UniProtKB"/>
</dbReference>
<dbReference type="GO" id="GO:0070536">
    <property type="term" value="P:protein K63-linked deubiquitination"/>
    <property type="evidence" value="ECO:0000250"/>
    <property type="project" value="UniProtKB"/>
</dbReference>
<dbReference type="CDD" id="cd22745">
    <property type="entry name" value="OTU_OTU1"/>
    <property type="match status" value="1"/>
</dbReference>
<dbReference type="CDD" id="cd17059">
    <property type="entry name" value="Ubl_OTU1"/>
    <property type="match status" value="1"/>
</dbReference>
<dbReference type="FunFam" id="3.10.20.90:FF:000096">
    <property type="entry name" value="Ubiquitin thioesterase OTU1"/>
    <property type="match status" value="1"/>
</dbReference>
<dbReference type="FunFam" id="3.90.70.80:FF:000006">
    <property type="entry name" value="Ubiquitin thioesterase OTU1"/>
    <property type="match status" value="1"/>
</dbReference>
<dbReference type="Gene3D" id="3.90.70.80">
    <property type="match status" value="1"/>
</dbReference>
<dbReference type="Gene3D" id="3.10.20.90">
    <property type="entry name" value="Phosphatidylinositol 3-kinase Catalytic Subunit, Chain A, domain 1"/>
    <property type="match status" value="1"/>
</dbReference>
<dbReference type="InterPro" id="IPR048857">
    <property type="entry name" value="OTU1_Ubl"/>
</dbReference>
<dbReference type="InterPro" id="IPR003323">
    <property type="entry name" value="OTU_dom"/>
</dbReference>
<dbReference type="InterPro" id="IPR038765">
    <property type="entry name" value="Papain-like_cys_pep_sf"/>
</dbReference>
<dbReference type="InterPro" id="IPR029071">
    <property type="entry name" value="Ubiquitin-like_domsf"/>
</dbReference>
<dbReference type="InterPro" id="IPR013087">
    <property type="entry name" value="Znf_C2H2_type"/>
</dbReference>
<dbReference type="PANTHER" id="PTHR13312">
    <property type="entry name" value="HIV-INDUCED PROTEIN-7-LIKE PROTEASE"/>
    <property type="match status" value="1"/>
</dbReference>
<dbReference type="PANTHER" id="PTHR13312:SF0">
    <property type="entry name" value="UBIQUITIN THIOESTERASE OTU1"/>
    <property type="match status" value="1"/>
</dbReference>
<dbReference type="Pfam" id="PF02338">
    <property type="entry name" value="OTU"/>
    <property type="match status" value="1"/>
</dbReference>
<dbReference type="Pfam" id="PF21403">
    <property type="entry name" value="OTU1_UBXL"/>
    <property type="match status" value="1"/>
</dbReference>
<dbReference type="Pfam" id="PF24560">
    <property type="entry name" value="zf-C2H2_OTU1_C"/>
    <property type="match status" value="1"/>
</dbReference>
<dbReference type="SUPFAM" id="SSF54001">
    <property type="entry name" value="Cysteine proteinases"/>
    <property type="match status" value="1"/>
</dbReference>
<dbReference type="SUPFAM" id="SSF54236">
    <property type="entry name" value="Ubiquitin-like"/>
    <property type="match status" value="1"/>
</dbReference>
<dbReference type="PROSITE" id="PS50802">
    <property type="entry name" value="OTU"/>
    <property type="match status" value="1"/>
</dbReference>
<dbReference type="PROSITE" id="PS00028">
    <property type="entry name" value="ZINC_FINGER_C2H2_1"/>
    <property type="match status" value="1"/>
</dbReference>
<comment type="function">
    <text evidence="1">Hydrolase that can remove conjugated ubiquitin from proteins and participates in endoplasmic reticulum-associated degradation (ERAD) for misfolded lumenal proteins. May act by triming the ubiquitin chain on the associated substrate to facilitate their threading through the VCP/p97 pore. Ubiquitin moieties on substrates may present a steric impediment to the threading process when the substrate is transferred to the VCP pore and threaded through VCP's axial channel. Mediates deubiquitination of 'Lys-27'-, 'Lys-29'- and 'Lys-33'-linked polyubiquitin chains. Also able to hydrolyze 'Lys-11'-linked ubiquitin chains. Cleaves both polyubiquitin and di-ubiquitin. May play a role in macroautophagy, regulating for instance the clearance of damaged lysosomes. May recruit PLAA, UBXN6 and VCP to damaged lysosome membranes decorated with K48-linked ubiquitin chains and remove these chains allowing autophagosome formation.</text>
</comment>
<comment type="catalytic activity">
    <reaction evidence="1">
        <text>Thiol-dependent hydrolysis of ester, thioester, amide, peptide and isopeptide bonds formed by the C-terminal Gly of ubiquitin (a 76-residue protein attached to proteins as an intracellular targeting signal).</text>
        <dbReference type="EC" id="3.4.19.12"/>
    </reaction>
</comment>
<comment type="subunit">
    <text evidence="1">Interacts with VCP; the interaction is direct. Interacts with FAF2/UBXD8. Interacts with DERL1; however interaction is dependent on the UBAX-like region, suggesting that it may be indirect. Interacts with PLAA, UBXN6 and VCP; may form a complex involved in macroautophagy.</text>
</comment>
<comment type="subcellular location">
    <subcellularLocation>
        <location evidence="1">Cytoplasm</location>
    </subcellularLocation>
    <text evidence="1">Recruited to damaged lysosomes decorated with K48-linked ubiquitin chains.</text>
</comment>
<comment type="domain">
    <text evidence="1">The UBAX-like region mediates the interaction with VCP.</text>
</comment>
<comment type="domain">
    <text evidence="1">The C2H2-type zinc finger mediates specificity for 'Lys-27'-, 'Lys-29'- and 'Lys-33'-linked polyubiquitin chains but not for 'Lys-11'-linked ubiquitin chains. Selectivity for 'Lys-11'-linked ubiquitin chains is provided by recognition of the sequence surrounding 'Lys-11' in ubiquitin. The S2 site region provides specificity for longer 'Lys-11'-linked ubiquitin chains.</text>
</comment>
<sequence>MFGGAKGGHFGVPPAGCSGAVSQAAAGTKAGPAGGRPADTMWRLRCKAKGGTHVLQGLSNRTRLRELQGQIAAITGIAPGSQRILVGYPPECLDLSDRDITLGDLPIQSGDMLIVEEDQTRPKASPAFSKHGAPSYVRETLPVLTRTAVPADNSCLFTSVYYVVEGGVLNPACAPEMRRLIAQIVASDPDLYSEAILGKTNEEYCDWIRRDDTWGGAIEISILSKFYQCEICVVDTQTVRIDRFGEDAGYTKRVLLIYDGIHYDPLQRNFPDPDTPPLTIFSSNDDIVLVQALELADEARRKRQFTDVNRFTLRCMLCQKGLTGQAEARDHARETGHTNFGEV</sequence>
<evidence type="ECO:0000250" key="1">
    <source>
        <dbReference type="UniProtKB" id="Q5VVQ6"/>
    </source>
</evidence>
<evidence type="ECO:0000250" key="2">
    <source>
        <dbReference type="UniProtKB" id="Q96FW1"/>
    </source>
</evidence>
<evidence type="ECO:0000255" key="3">
    <source>
        <dbReference type="PROSITE-ProRule" id="PRU00139"/>
    </source>
</evidence>
<protein>
    <recommendedName>
        <fullName>Ubiquitin thioesterase OTU1</fullName>
        <ecNumber evidence="1">3.4.19.12</ecNumber>
    </recommendedName>
</protein>
<reference key="1">
    <citation type="journal article" date="2004" name="Genome Res.">
        <title>The status, quality, and expansion of the NIH full-length cDNA project: the Mammalian Gene Collection (MGC).</title>
        <authorList>
            <consortium name="The MGC Project Team"/>
        </authorList>
    </citation>
    <scope>NUCLEOTIDE SEQUENCE [LARGE SCALE MRNA]</scope>
    <source>
        <tissue>Testis</tissue>
    </source>
</reference>
<reference key="2">
    <citation type="journal article" date="2004" name="Genome Res.">
        <title>A genomic analysis of rat proteases and protease inhibitors.</title>
        <authorList>
            <person name="Puente X.S."/>
            <person name="Lopez-Otin C."/>
        </authorList>
    </citation>
    <scope>IDENTIFICATION</scope>
</reference>
<gene>
    <name type="primary">Yod1</name>
    <name type="synonym">Hshin7</name>
</gene>
<proteinExistence type="evidence at transcript level"/>